<dbReference type="EMBL" id="BC112521">
    <property type="protein sequence ID" value="AAI12522.1"/>
    <property type="molecule type" value="mRNA"/>
</dbReference>
<dbReference type="RefSeq" id="NP_001073109.1">
    <property type="nucleotide sequence ID" value="NM_001079641.2"/>
</dbReference>
<dbReference type="SMR" id="Q2KIT1"/>
<dbReference type="FunCoup" id="Q2KIT1">
    <property type="interactions" value="3880"/>
</dbReference>
<dbReference type="STRING" id="9913.ENSBTAP00000005368"/>
<dbReference type="PaxDb" id="9913-ENSBTAP00000005368"/>
<dbReference type="GeneID" id="780786"/>
<dbReference type="KEGG" id="bta:780786"/>
<dbReference type="CTD" id="79706"/>
<dbReference type="eggNOG" id="KOG4055">
    <property type="taxonomic scope" value="Eukaryota"/>
</dbReference>
<dbReference type="InParanoid" id="Q2KIT1"/>
<dbReference type="OrthoDB" id="10067079at2759"/>
<dbReference type="Proteomes" id="UP000009136">
    <property type="component" value="Unplaced"/>
</dbReference>
<dbReference type="GO" id="GO:0005730">
    <property type="term" value="C:nucleolus"/>
    <property type="evidence" value="ECO:0000250"/>
    <property type="project" value="UniProtKB"/>
</dbReference>
<dbReference type="GO" id="GO:0005681">
    <property type="term" value="C:spliceosomal complex"/>
    <property type="evidence" value="ECO:0007669"/>
    <property type="project" value="UniProtKB-KW"/>
</dbReference>
<dbReference type="GO" id="GO:0003725">
    <property type="term" value="F:double-stranded RNA binding"/>
    <property type="evidence" value="ECO:0000250"/>
    <property type="project" value="UniProtKB"/>
</dbReference>
<dbReference type="GO" id="GO:0019901">
    <property type="term" value="F:protein kinase binding"/>
    <property type="evidence" value="ECO:0000250"/>
    <property type="project" value="UniProtKB"/>
</dbReference>
<dbReference type="GO" id="GO:0004860">
    <property type="term" value="F:protein kinase inhibitor activity"/>
    <property type="evidence" value="ECO:0000250"/>
    <property type="project" value="UniProtKB"/>
</dbReference>
<dbReference type="GO" id="GO:0006397">
    <property type="term" value="P:mRNA processing"/>
    <property type="evidence" value="ECO:0007669"/>
    <property type="project" value="UniProtKB-KW"/>
</dbReference>
<dbReference type="GO" id="GO:0008380">
    <property type="term" value="P:RNA splicing"/>
    <property type="evidence" value="ECO:0007669"/>
    <property type="project" value="UniProtKB-KW"/>
</dbReference>
<dbReference type="InterPro" id="IPR009548">
    <property type="entry name" value="Prkrip1"/>
</dbReference>
<dbReference type="PANTHER" id="PTHR13507">
    <property type="entry name" value="PRKR-INTERACTING PROTEIN 1"/>
    <property type="match status" value="1"/>
</dbReference>
<dbReference type="PANTHER" id="PTHR13507:SF0">
    <property type="entry name" value="PRKR-INTERACTING PROTEIN 1"/>
    <property type="match status" value="1"/>
</dbReference>
<dbReference type="Pfam" id="PF06658">
    <property type="entry name" value="DUF1168"/>
    <property type="match status" value="1"/>
</dbReference>
<organism>
    <name type="scientific">Bos taurus</name>
    <name type="common">Bovine</name>
    <dbReference type="NCBI Taxonomy" id="9913"/>
    <lineage>
        <taxon>Eukaryota</taxon>
        <taxon>Metazoa</taxon>
        <taxon>Chordata</taxon>
        <taxon>Craniata</taxon>
        <taxon>Vertebrata</taxon>
        <taxon>Euteleostomi</taxon>
        <taxon>Mammalia</taxon>
        <taxon>Eutheria</taxon>
        <taxon>Laurasiatheria</taxon>
        <taxon>Artiodactyla</taxon>
        <taxon>Ruminantia</taxon>
        <taxon>Pecora</taxon>
        <taxon>Bovidae</taxon>
        <taxon>Bovinae</taxon>
        <taxon>Bos</taxon>
    </lineage>
</organism>
<comment type="function">
    <text evidence="2 3">Required for pre-mRNA splicing as component of the spliceosome (By similarity). Binds double-stranded RNA. Inhibits EIF2AK2 kinase activity (By similarity).</text>
</comment>
<comment type="subunit">
    <text evidence="2 3">Component of the pre-catalytic and post-catalytic spliceosome complexes (By similarity). Interacts with EIF2AK2 (By similarity).</text>
</comment>
<comment type="subcellular location">
    <subcellularLocation>
        <location evidence="3">Nucleus</location>
    </subcellularLocation>
    <subcellularLocation>
        <location evidence="2">Nucleus</location>
        <location evidence="2">Nucleolus</location>
    </subcellularLocation>
</comment>
<comment type="similarity">
    <text evidence="6">Belongs to the PRKRIP1 family.</text>
</comment>
<keyword id="KW-0175">Coiled coil</keyword>
<keyword id="KW-0507">mRNA processing</keyword>
<keyword id="KW-0508">mRNA splicing</keyword>
<keyword id="KW-0539">Nucleus</keyword>
<keyword id="KW-1185">Reference proteome</keyword>
<keyword id="KW-0747">Spliceosome</keyword>
<name>PKRI1_BOVIN</name>
<evidence type="ECO:0000250" key="1"/>
<evidence type="ECO:0000250" key="2">
    <source>
        <dbReference type="UniProtKB" id="Q9CWV6"/>
    </source>
</evidence>
<evidence type="ECO:0000250" key="3">
    <source>
        <dbReference type="UniProtKB" id="Q9H875"/>
    </source>
</evidence>
<evidence type="ECO:0000255" key="4"/>
<evidence type="ECO:0000256" key="5">
    <source>
        <dbReference type="SAM" id="MobiDB-lite"/>
    </source>
</evidence>
<evidence type="ECO:0000305" key="6"/>
<proteinExistence type="evidence at transcript level"/>
<gene>
    <name type="primary">PRKRIP1</name>
</gene>
<feature type="chain" id="PRO_0000324786" description="PRKR-interacting protein 1">
    <location>
        <begin position="1"/>
        <end position="186"/>
    </location>
</feature>
<feature type="region of interest" description="Interaction with EIF2AK2" evidence="1">
    <location>
        <begin position="1"/>
        <end position="50"/>
    </location>
</feature>
<feature type="region of interest" description="Disordered" evidence="5">
    <location>
        <begin position="39"/>
        <end position="61"/>
    </location>
</feature>
<feature type="region of interest" description="Required for RNA-binding" evidence="1">
    <location>
        <begin position="51"/>
        <end position="143"/>
    </location>
</feature>
<feature type="region of interest" description="Disordered" evidence="5">
    <location>
        <begin position="119"/>
        <end position="186"/>
    </location>
</feature>
<feature type="region of interest" description="Required for nuclear localization" evidence="1">
    <location>
        <begin position="126"/>
        <end position="138"/>
    </location>
</feature>
<feature type="coiled-coil region" evidence="4">
    <location>
        <begin position="86"/>
        <end position="153"/>
    </location>
</feature>
<feature type="compositionally biased region" description="Basic residues" evidence="5">
    <location>
        <begin position="126"/>
        <end position="143"/>
    </location>
</feature>
<feature type="compositionally biased region" description="Polar residues" evidence="5">
    <location>
        <begin position="153"/>
        <end position="162"/>
    </location>
</feature>
<feature type="compositionally biased region" description="Acidic residues" evidence="5">
    <location>
        <begin position="170"/>
        <end position="179"/>
    </location>
</feature>
<sequence>MASSAASSVRPPRPKKEPQALIIPKNAAEEQKLKLERLMKNPDKAVPIPEKMSEWAPRPPPEFVRDVMGSSAGAGSGEFHVYRHLRRREYQRQDYMDAMAEKQKLEAEFQKRLERNKIAAEEQTAKRRKKRQKLKEKKLLAKKMKLEQKKQSEASSETQEQPSSGSEEASGTEDEEEDAPSFITGR</sequence>
<accession>Q2KIT1</accession>
<protein>
    <recommendedName>
        <fullName>PRKR-interacting protein 1</fullName>
    </recommendedName>
</protein>
<reference key="1">
    <citation type="submission" date="2006-01" db="EMBL/GenBank/DDBJ databases">
        <authorList>
            <consortium name="NIH - Mammalian Gene Collection (MGC) project"/>
        </authorList>
    </citation>
    <scope>NUCLEOTIDE SEQUENCE [LARGE SCALE MRNA]</scope>
    <source>
        <strain>Hereford</strain>
        <tissue>Testis</tissue>
    </source>
</reference>